<protein>
    <recommendedName>
        <fullName evidence="1">Indole-3-glycerol phosphate synthase</fullName>
        <shortName evidence="1">IGPS</shortName>
        <ecNumber evidence="1">4.1.1.48</ecNumber>
    </recommendedName>
</protein>
<proteinExistence type="inferred from homology"/>
<dbReference type="EC" id="4.1.1.48" evidence="1"/>
<dbReference type="EMBL" id="FM211187">
    <property type="protein sequence ID" value="CAR69598.1"/>
    <property type="molecule type" value="Genomic_DNA"/>
</dbReference>
<dbReference type="RefSeq" id="WP_000076548.1">
    <property type="nucleotide sequence ID" value="NC_011900.1"/>
</dbReference>
<dbReference type="SMR" id="B8ZN61"/>
<dbReference type="KEGG" id="sne:SPN23F18340"/>
<dbReference type="HOGENOM" id="CLU_034247_2_1_9"/>
<dbReference type="UniPathway" id="UPA00035">
    <property type="reaction ID" value="UER00043"/>
</dbReference>
<dbReference type="GO" id="GO:0004425">
    <property type="term" value="F:indole-3-glycerol-phosphate synthase activity"/>
    <property type="evidence" value="ECO:0007669"/>
    <property type="project" value="UniProtKB-UniRule"/>
</dbReference>
<dbReference type="GO" id="GO:0004640">
    <property type="term" value="F:phosphoribosylanthranilate isomerase activity"/>
    <property type="evidence" value="ECO:0007669"/>
    <property type="project" value="TreeGrafter"/>
</dbReference>
<dbReference type="GO" id="GO:0000162">
    <property type="term" value="P:L-tryptophan biosynthetic process"/>
    <property type="evidence" value="ECO:0007669"/>
    <property type="project" value="UniProtKB-UniRule"/>
</dbReference>
<dbReference type="CDD" id="cd00331">
    <property type="entry name" value="IGPS"/>
    <property type="match status" value="1"/>
</dbReference>
<dbReference type="FunFam" id="3.20.20.70:FF:000024">
    <property type="entry name" value="Indole-3-glycerol phosphate synthase"/>
    <property type="match status" value="1"/>
</dbReference>
<dbReference type="Gene3D" id="3.20.20.70">
    <property type="entry name" value="Aldolase class I"/>
    <property type="match status" value="1"/>
</dbReference>
<dbReference type="HAMAP" id="MF_00134_B">
    <property type="entry name" value="IGPS_B"/>
    <property type="match status" value="1"/>
</dbReference>
<dbReference type="InterPro" id="IPR013785">
    <property type="entry name" value="Aldolase_TIM"/>
</dbReference>
<dbReference type="InterPro" id="IPR045186">
    <property type="entry name" value="Indole-3-glycerol_P_synth"/>
</dbReference>
<dbReference type="InterPro" id="IPR013798">
    <property type="entry name" value="Indole-3-glycerol_P_synth_dom"/>
</dbReference>
<dbReference type="InterPro" id="IPR001468">
    <property type="entry name" value="Indole-3-GlycerolPSynthase_CS"/>
</dbReference>
<dbReference type="InterPro" id="IPR011060">
    <property type="entry name" value="RibuloseP-bd_barrel"/>
</dbReference>
<dbReference type="NCBIfam" id="NF001371">
    <property type="entry name" value="PRK00278.1-3"/>
    <property type="match status" value="1"/>
</dbReference>
<dbReference type="NCBIfam" id="NF001377">
    <property type="entry name" value="PRK00278.2-4"/>
    <property type="match status" value="1"/>
</dbReference>
<dbReference type="PANTHER" id="PTHR22854:SF2">
    <property type="entry name" value="INDOLE-3-GLYCEROL-PHOSPHATE SYNTHASE"/>
    <property type="match status" value="1"/>
</dbReference>
<dbReference type="PANTHER" id="PTHR22854">
    <property type="entry name" value="TRYPTOPHAN BIOSYNTHESIS PROTEIN"/>
    <property type="match status" value="1"/>
</dbReference>
<dbReference type="Pfam" id="PF00218">
    <property type="entry name" value="IGPS"/>
    <property type="match status" value="1"/>
</dbReference>
<dbReference type="SUPFAM" id="SSF51366">
    <property type="entry name" value="Ribulose-phoshate binding barrel"/>
    <property type="match status" value="1"/>
</dbReference>
<dbReference type="PROSITE" id="PS00614">
    <property type="entry name" value="IGPS"/>
    <property type="match status" value="1"/>
</dbReference>
<reference key="1">
    <citation type="journal article" date="2009" name="J. Bacteriol.">
        <title>Role of conjugative elements in the evolution of the multidrug-resistant pandemic clone Streptococcus pneumoniae Spain23F ST81.</title>
        <authorList>
            <person name="Croucher N.J."/>
            <person name="Walker D."/>
            <person name="Romero P."/>
            <person name="Lennard N."/>
            <person name="Paterson G.K."/>
            <person name="Bason N.C."/>
            <person name="Mitchell A.M."/>
            <person name="Quail M.A."/>
            <person name="Andrew P.W."/>
            <person name="Parkhill J."/>
            <person name="Bentley S.D."/>
            <person name="Mitchell T.J."/>
        </authorList>
    </citation>
    <scope>NUCLEOTIDE SEQUENCE [LARGE SCALE GENOMIC DNA]</scope>
    <source>
        <strain>ATCC 700669 / Spain 23F-1</strain>
    </source>
</reference>
<sequence length="255" mass="28940">MSQEFLARILEQKAREVEQMKLEQIQPLRQTYRLAEFLKNHQDRLQVIAEVKKASPSLGDINLDVDIVQQAQTYEENGAVMISVLTDEVFFKGHLDYLREISSQVEIPTLNKDFIIDEKQIIRARNAGATVILLIVAALSEERLKELYDYATELGLEVLVETHNLAELEVAHRLGAEIIGVNNRNLTTFEVDLQTSVDLAPYFEEGRYYISESAIFTGQDAERLAPYFNGILVGTALMQAENVAQRIKELQIDKG</sequence>
<organism>
    <name type="scientific">Streptococcus pneumoniae (strain ATCC 700669 / Spain 23F-1)</name>
    <dbReference type="NCBI Taxonomy" id="561276"/>
    <lineage>
        <taxon>Bacteria</taxon>
        <taxon>Bacillati</taxon>
        <taxon>Bacillota</taxon>
        <taxon>Bacilli</taxon>
        <taxon>Lactobacillales</taxon>
        <taxon>Streptococcaceae</taxon>
        <taxon>Streptococcus</taxon>
    </lineage>
</organism>
<evidence type="ECO:0000255" key="1">
    <source>
        <dbReference type="HAMAP-Rule" id="MF_00134"/>
    </source>
</evidence>
<feature type="chain" id="PRO_1000198788" description="Indole-3-glycerol phosphate synthase">
    <location>
        <begin position="1"/>
        <end position="255"/>
    </location>
</feature>
<comment type="catalytic activity">
    <reaction evidence="1">
        <text>1-(2-carboxyphenylamino)-1-deoxy-D-ribulose 5-phosphate + H(+) = (1S,2R)-1-C-(indol-3-yl)glycerol 3-phosphate + CO2 + H2O</text>
        <dbReference type="Rhea" id="RHEA:23476"/>
        <dbReference type="ChEBI" id="CHEBI:15377"/>
        <dbReference type="ChEBI" id="CHEBI:15378"/>
        <dbReference type="ChEBI" id="CHEBI:16526"/>
        <dbReference type="ChEBI" id="CHEBI:58613"/>
        <dbReference type="ChEBI" id="CHEBI:58866"/>
        <dbReference type="EC" id="4.1.1.48"/>
    </reaction>
</comment>
<comment type="pathway">
    <text evidence="1">Amino-acid biosynthesis; L-tryptophan biosynthesis; L-tryptophan from chorismate: step 4/5.</text>
</comment>
<comment type="similarity">
    <text evidence="1">Belongs to the TrpC family.</text>
</comment>
<gene>
    <name evidence="1" type="primary">trpC</name>
    <name type="ordered locus">SPN23F18340</name>
</gene>
<keyword id="KW-0028">Amino-acid biosynthesis</keyword>
<keyword id="KW-0057">Aromatic amino acid biosynthesis</keyword>
<keyword id="KW-0210">Decarboxylase</keyword>
<keyword id="KW-0456">Lyase</keyword>
<keyword id="KW-0822">Tryptophan biosynthesis</keyword>
<accession>B8ZN61</accession>
<name>TRPC_STRPJ</name>